<keyword id="KW-0143">Chaperone</keyword>
<keyword id="KW-0963">Cytoplasm</keyword>
<keyword id="KW-0235">DNA replication</keyword>
<keyword id="KW-0479">Metal-binding</keyword>
<keyword id="KW-0677">Repeat</keyword>
<keyword id="KW-0346">Stress response</keyword>
<keyword id="KW-0862">Zinc</keyword>
<keyword id="KW-0863">Zinc-finger</keyword>
<gene>
    <name evidence="1" type="primary">dnaJ</name>
    <name type="ordered locus">CTN_1726</name>
</gene>
<accession>B9KAB9</accession>
<sequence>MKREKKDYYEILGVPRNATQEEIRKAYKRLVKEWHPDRHPENRKEAEQRFKEIQEAYEVLSDPQKRAMYDRFGYVGEQPVYQEAETGGSFFEDVFREFENIFNRDIFDVFFGEESGRRERREYARRGEDIRYTIEVNLSDLINGTEIPIEYERYETCPRCGGTGVEPDSGYISCPRCGGTGRIREEKRSFFGYFVSERTCDECGGTGRVPQELCHECGGSGRVLRRVRRTIKIPPNIEDGGHLRIPGGGNAGYYGGPYGDLIITVRVRSDSRFKRSGKDLIYDITIDYLQAILGTTVEIPLPEGGTTMLKIPPGTQPETVFRLKGKGLPGEYGRRGDLLVNVHVEIPKNLSREERKVLEDLAKKRGIPVA</sequence>
<protein>
    <recommendedName>
        <fullName evidence="1">Chaperone protein DnaJ</fullName>
    </recommendedName>
</protein>
<feature type="chain" id="PRO_1000164281" description="Chaperone protein DnaJ">
    <location>
        <begin position="1"/>
        <end position="370"/>
    </location>
</feature>
<feature type="domain" description="J" evidence="1">
    <location>
        <begin position="7"/>
        <end position="73"/>
    </location>
</feature>
<feature type="repeat" description="CXXCXGXG motif">
    <location>
        <begin position="157"/>
        <end position="164"/>
    </location>
</feature>
<feature type="repeat" description="CXXCXGXG motif">
    <location>
        <begin position="174"/>
        <end position="181"/>
    </location>
</feature>
<feature type="repeat" description="CXXCXGXG motif">
    <location>
        <begin position="200"/>
        <end position="207"/>
    </location>
</feature>
<feature type="repeat" description="CXXCXGXG motif">
    <location>
        <begin position="214"/>
        <end position="221"/>
    </location>
</feature>
<feature type="zinc finger region" description="CR-type" evidence="1">
    <location>
        <begin position="144"/>
        <end position="226"/>
    </location>
</feature>
<feature type="binding site" evidence="1">
    <location>
        <position position="157"/>
    </location>
    <ligand>
        <name>Zn(2+)</name>
        <dbReference type="ChEBI" id="CHEBI:29105"/>
        <label>1</label>
    </ligand>
</feature>
<feature type="binding site" evidence="1">
    <location>
        <position position="160"/>
    </location>
    <ligand>
        <name>Zn(2+)</name>
        <dbReference type="ChEBI" id="CHEBI:29105"/>
        <label>1</label>
    </ligand>
</feature>
<feature type="binding site" evidence="1">
    <location>
        <position position="174"/>
    </location>
    <ligand>
        <name>Zn(2+)</name>
        <dbReference type="ChEBI" id="CHEBI:29105"/>
        <label>2</label>
    </ligand>
</feature>
<feature type="binding site" evidence="1">
    <location>
        <position position="177"/>
    </location>
    <ligand>
        <name>Zn(2+)</name>
        <dbReference type="ChEBI" id="CHEBI:29105"/>
        <label>2</label>
    </ligand>
</feature>
<feature type="binding site" evidence="1">
    <location>
        <position position="200"/>
    </location>
    <ligand>
        <name>Zn(2+)</name>
        <dbReference type="ChEBI" id="CHEBI:29105"/>
        <label>2</label>
    </ligand>
</feature>
<feature type="binding site" evidence="1">
    <location>
        <position position="203"/>
    </location>
    <ligand>
        <name>Zn(2+)</name>
        <dbReference type="ChEBI" id="CHEBI:29105"/>
        <label>2</label>
    </ligand>
</feature>
<feature type="binding site" evidence="1">
    <location>
        <position position="214"/>
    </location>
    <ligand>
        <name>Zn(2+)</name>
        <dbReference type="ChEBI" id="CHEBI:29105"/>
        <label>1</label>
    </ligand>
</feature>
<feature type="binding site" evidence="1">
    <location>
        <position position="217"/>
    </location>
    <ligand>
        <name>Zn(2+)</name>
        <dbReference type="ChEBI" id="CHEBI:29105"/>
        <label>1</label>
    </ligand>
</feature>
<comment type="function">
    <text evidence="1">Participates actively in the response to hyperosmotic and heat shock by preventing the aggregation of stress-denatured proteins and by disaggregating proteins, also in an autonomous, DnaK-independent fashion. Unfolded proteins bind initially to DnaJ; upon interaction with the DnaJ-bound protein, DnaK hydrolyzes its bound ATP, resulting in the formation of a stable complex. GrpE releases ADP from DnaK; ATP binding to DnaK triggers the release of the substrate protein, thus completing the reaction cycle. Several rounds of ATP-dependent interactions between DnaJ, DnaK and GrpE are required for fully efficient folding. Also involved, together with DnaK and GrpE, in the DNA replication of plasmids through activation of initiation proteins.</text>
</comment>
<comment type="cofactor">
    <cofactor evidence="1">
        <name>Zn(2+)</name>
        <dbReference type="ChEBI" id="CHEBI:29105"/>
    </cofactor>
    <text evidence="1">Binds 2 Zn(2+) ions per monomer.</text>
</comment>
<comment type="subunit">
    <text evidence="1">Homodimer.</text>
</comment>
<comment type="subcellular location">
    <subcellularLocation>
        <location evidence="1">Cytoplasm</location>
    </subcellularLocation>
</comment>
<comment type="domain">
    <text evidence="1">The J domain is necessary and sufficient to stimulate DnaK ATPase activity. Zinc center 1 plays an important role in the autonomous, DnaK-independent chaperone activity of DnaJ. Zinc center 2 is essential for interaction with DnaK and for DnaJ activity.</text>
</comment>
<comment type="similarity">
    <text evidence="1">Belongs to the DnaJ family.</text>
</comment>
<evidence type="ECO:0000255" key="1">
    <source>
        <dbReference type="HAMAP-Rule" id="MF_01152"/>
    </source>
</evidence>
<name>DNAJ_THENN</name>
<proteinExistence type="inferred from homology"/>
<organism>
    <name type="scientific">Thermotoga neapolitana (strain ATCC 49049 / DSM 4359 / NBRC 107923 / NS-E)</name>
    <dbReference type="NCBI Taxonomy" id="309803"/>
    <lineage>
        <taxon>Bacteria</taxon>
        <taxon>Thermotogati</taxon>
        <taxon>Thermotogota</taxon>
        <taxon>Thermotogae</taxon>
        <taxon>Thermotogales</taxon>
        <taxon>Thermotogaceae</taxon>
        <taxon>Thermotoga</taxon>
    </lineage>
</organism>
<dbReference type="EMBL" id="CP000916">
    <property type="protein sequence ID" value="ACM23902.1"/>
    <property type="molecule type" value="Genomic_DNA"/>
</dbReference>
<dbReference type="RefSeq" id="WP_015920140.1">
    <property type="nucleotide sequence ID" value="NC_011978.1"/>
</dbReference>
<dbReference type="SMR" id="B9KAB9"/>
<dbReference type="STRING" id="309803.CTN_1726"/>
<dbReference type="KEGG" id="tna:CTN_1726"/>
<dbReference type="eggNOG" id="COG0484">
    <property type="taxonomic scope" value="Bacteria"/>
</dbReference>
<dbReference type="HOGENOM" id="CLU_017633_0_7_0"/>
<dbReference type="Proteomes" id="UP000000445">
    <property type="component" value="Chromosome"/>
</dbReference>
<dbReference type="GO" id="GO:0005737">
    <property type="term" value="C:cytoplasm"/>
    <property type="evidence" value="ECO:0007669"/>
    <property type="project" value="UniProtKB-SubCell"/>
</dbReference>
<dbReference type="GO" id="GO:0005524">
    <property type="term" value="F:ATP binding"/>
    <property type="evidence" value="ECO:0007669"/>
    <property type="project" value="InterPro"/>
</dbReference>
<dbReference type="GO" id="GO:0031072">
    <property type="term" value="F:heat shock protein binding"/>
    <property type="evidence" value="ECO:0007669"/>
    <property type="project" value="InterPro"/>
</dbReference>
<dbReference type="GO" id="GO:0051082">
    <property type="term" value="F:unfolded protein binding"/>
    <property type="evidence" value="ECO:0007669"/>
    <property type="project" value="UniProtKB-UniRule"/>
</dbReference>
<dbReference type="GO" id="GO:0008270">
    <property type="term" value="F:zinc ion binding"/>
    <property type="evidence" value="ECO:0007669"/>
    <property type="project" value="UniProtKB-UniRule"/>
</dbReference>
<dbReference type="GO" id="GO:0051085">
    <property type="term" value="P:chaperone cofactor-dependent protein refolding"/>
    <property type="evidence" value="ECO:0007669"/>
    <property type="project" value="TreeGrafter"/>
</dbReference>
<dbReference type="GO" id="GO:0006260">
    <property type="term" value="P:DNA replication"/>
    <property type="evidence" value="ECO:0007669"/>
    <property type="project" value="UniProtKB-KW"/>
</dbReference>
<dbReference type="GO" id="GO:0042026">
    <property type="term" value="P:protein refolding"/>
    <property type="evidence" value="ECO:0007669"/>
    <property type="project" value="TreeGrafter"/>
</dbReference>
<dbReference type="GO" id="GO:0009408">
    <property type="term" value="P:response to heat"/>
    <property type="evidence" value="ECO:0007669"/>
    <property type="project" value="InterPro"/>
</dbReference>
<dbReference type="CDD" id="cd06257">
    <property type="entry name" value="DnaJ"/>
    <property type="match status" value="1"/>
</dbReference>
<dbReference type="CDD" id="cd10747">
    <property type="entry name" value="DnaJ_C"/>
    <property type="match status" value="1"/>
</dbReference>
<dbReference type="CDD" id="cd10719">
    <property type="entry name" value="DnaJ_zf"/>
    <property type="match status" value="1"/>
</dbReference>
<dbReference type="FunFam" id="1.10.287.110:FF:000034">
    <property type="entry name" value="Chaperone protein DnaJ"/>
    <property type="match status" value="1"/>
</dbReference>
<dbReference type="FunFam" id="2.60.260.20:FF:000005">
    <property type="entry name" value="Chaperone protein dnaJ 1, mitochondrial"/>
    <property type="match status" value="1"/>
</dbReference>
<dbReference type="FunFam" id="2.10.230.10:FF:000002">
    <property type="entry name" value="Molecular chaperone DnaJ"/>
    <property type="match status" value="1"/>
</dbReference>
<dbReference type="Gene3D" id="1.10.287.110">
    <property type="entry name" value="DnaJ domain"/>
    <property type="match status" value="1"/>
</dbReference>
<dbReference type="Gene3D" id="2.10.230.10">
    <property type="entry name" value="Heat shock protein DnaJ, cysteine-rich domain"/>
    <property type="match status" value="1"/>
</dbReference>
<dbReference type="Gene3D" id="2.60.260.20">
    <property type="entry name" value="Urease metallochaperone UreE, N-terminal domain"/>
    <property type="match status" value="2"/>
</dbReference>
<dbReference type="HAMAP" id="MF_01152">
    <property type="entry name" value="DnaJ"/>
    <property type="match status" value="1"/>
</dbReference>
<dbReference type="InterPro" id="IPR012724">
    <property type="entry name" value="DnaJ"/>
</dbReference>
<dbReference type="InterPro" id="IPR002939">
    <property type="entry name" value="DnaJ_C"/>
</dbReference>
<dbReference type="InterPro" id="IPR001623">
    <property type="entry name" value="DnaJ_domain"/>
</dbReference>
<dbReference type="InterPro" id="IPR018253">
    <property type="entry name" value="DnaJ_domain_CS"/>
</dbReference>
<dbReference type="InterPro" id="IPR008971">
    <property type="entry name" value="HSP40/DnaJ_pept-bd"/>
</dbReference>
<dbReference type="InterPro" id="IPR001305">
    <property type="entry name" value="HSP_DnaJ_Cys-rich_dom"/>
</dbReference>
<dbReference type="InterPro" id="IPR036410">
    <property type="entry name" value="HSP_DnaJ_Cys-rich_dom_sf"/>
</dbReference>
<dbReference type="InterPro" id="IPR036869">
    <property type="entry name" value="J_dom_sf"/>
</dbReference>
<dbReference type="NCBIfam" id="TIGR02349">
    <property type="entry name" value="DnaJ_bact"/>
    <property type="match status" value="1"/>
</dbReference>
<dbReference type="NCBIfam" id="NF008035">
    <property type="entry name" value="PRK10767.1"/>
    <property type="match status" value="1"/>
</dbReference>
<dbReference type="NCBIfam" id="NF010875">
    <property type="entry name" value="PRK14282.1"/>
    <property type="match status" value="1"/>
</dbReference>
<dbReference type="PANTHER" id="PTHR43096">
    <property type="entry name" value="DNAJ HOMOLOG 1, MITOCHONDRIAL-RELATED"/>
    <property type="match status" value="1"/>
</dbReference>
<dbReference type="PANTHER" id="PTHR43096:SF52">
    <property type="entry name" value="DNAJ HOMOLOG 1, MITOCHONDRIAL-RELATED"/>
    <property type="match status" value="1"/>
</dbReference>
<dbReference type="Pfam" id="PF00226">
    <property type="entry name" value="DnaJ"/>
    <property type="match status" value="1"/>
</dbReference>
<dbReference type="Pfam" id="PF01556">
    <property type="entry name" value="DnaJ_C"/>
    <property type="match status" value="1"/>
</dbReference>
<dbReference type="Pfam" id="PF00684">
    <property type="entry name" value="DnaJ_CXXCXGXG"/>
    <property type="match status" value="1"/>
</dbReference>
<dbReference type="PRINTS" id="PR00625">
    <property type="entry name" value="JDOMAIN"/>
</dbReference>
<dbReference type="SMART" id="SM00271">
    <property type="entry name" value="DnaJ"/>
    <property type="match status" value="1"/>
</dbReference>
<dbReference type="SUPFAM" id="SSF46565">
    <property type="entry name" value="Chaperone J-domain"/>
    <property type="match status" value="1"/>
</dbReference>
<dbReference type="SUPFAM" id="SSF57938">
    <property type="entry name" value="DnaJ/Hsp40 cysteine-rich domain"/>
    <property type="match status" value="1"/>
</dbReference>
<dbReference type="SUPFAM" id="SSF49493">
    <property type="entry name" value="HSP40/DnaJ peptide-binding domain"/>
    <property type="match status" value="2"/>
</dbReference>
<dbReference type="PROSITE" id="PS00636">
    <property type="entry name" value="DNAJ_1"/>
    <property type="match status" value="1"/>
</dbReference>
<dbReference type="PROSITE" id="PS50076">
    <property type="entry name" value="DNAJ_2"/>
    <property type="match status" value="1"/>
</dbReference>
<dbReference type="PROSITE" id="PS51188">
    <property type="entry name" value="ZF_CR"/>
    <property type="match status" value="1"/>
</dbReference>
<reference key="1">
    <citation type="submission" date="2007-11" db="EMBL/GenBank/DDBJ databases">
        <title>The genome sequence of the hyperthermophilic bacterium Thermotoga neapolitana.</title>
        <authorList>
            <person name="Lim S.K."/>
            <person name="Kim J.S."/>
            <person name="Cha S.H."/>
            <person name="Park B.C."/>
            <person name="Lee D.S."/>
            <person name="Tae H.S."/>
            <person name="Kim S.-J."/>
            <person name="Kim J.J."/>
            <person name="Park K.J."/>
            <person name="Lee S.Y."/>
        </authorList>
    </citation>
    <scope>NUCLEOTIDE SEQUENCE [LARGE SCALE GENOMIC DNA]</scope>
    <source>
        <strain>ATCC 49049 / DSM 4359 / NBRC 107923 / NS-E</strain>
    </source>
</reference>